<gene>
    <name evidence="1" type="primary">rplR</name>
    <name evidence="1" type="synonym">rpl18</name>
    <name type="ordered locus">PMN2A_1114</name>
</gene>
<reference key="1">
    <citation type="journal article" date="2007" name="PLoS Genet.">
        <title>Patterns and implications of gene gain and loss in the evolution of Prochlorococcus.</title>
        <authorList>
            <person name="Kettler G.C."/>
            <person name="Martiny A.C."/>
            <person name="Huang K."/>
            <person name="Zucker J."/>
            <person name="Coleman M.L."/>
            <person name="Rodrigue S."/>
            <person name="Chen F."/>
            <person name="Lapidus A."/>
            <person name="Ferriera S."/>
            <person name="Johnson J."/>
            <person name="Steglich C."/>
            <person name="Church G.M."/>
            <person name="Richardson P."/>
            <person name="Chisholm S.W."/>
        </authorList>
    </citation>
    <scope>NUCLEOTIDE SEQUENCE [LARGE SCALE GENOMIC DNA]</scope>
    <source>
        <strain>NATL2A</strain>
    </source>
</reference>
<feature type="chain" id="PRO_0000251343" description="Large ribosomal subunit protein uL18">
    <location>
        <begin position="1"/>
        <end position="122"/>
    </location>
</feature>
<feature type="region of interest" description="Disordered" evidence="2">
    <location>
        <begin position="1"/>
        <end position="27"/>
    </location>
</feature>
<feature type="compositionally biased region" description="Basic residues" evidence="2">
    <location>
        <begin position="1"/>
        <end position="19"/>
    </location>
</feature>
<accession>Q46IS4</accession>
<organism>
    <name type="scientific">Prochlorococcus marinus (strain NATL2A)</name>
    <dbReference type="NCBI Taxonomy" id="59920"/>
    <lineage>
        <taxon>Bacteria</taxon>
        <taxon>Bacillati</taxon>
        <taxon>Cyanobacteriota</taxon>
        <taxon>Cyanophyceae</taxon>
        <taxon>Synechococcales</taxon>
        <taxon>Prochlorococcaceae</taxon>
        <taxon>Prochlorococcus</taxon>
    </lineage>
</organism>
<dbReference type="EMBL" id="CP000095">
    <property type="protein sequence ID" value="AAZ58604.1"/>
    <property type="molecule type" value="Genomic_DNA"/>
</dbReference>
<dbReference type="RefSeq" id="WP_011295458.1">
    <property type="nucleotide sequence ID" value="NC_007335.2"/>
</dbReference>
<dbReference type="SMR" id="Q46IS4"/>
<dbReference type="STRING" id="59920.PMN2A_1114"/>
<dbReference type="KEGG" id="pmn:PMN2A_1114"/>
<dbReference type="HOGENOM" id="CLU_098841_0_1_3"/>
<dbReference type="OrthoDB" id="9810939at2"/>
<dbReference type="PhylomeDB" id="Q46IS4"/>
<dbReference type="Proteomes" id="UP000002535">
    <property type="component" value="Chromosome"/>
</dbReference>
<dbReference type="GO" id="GO:0022625">
    <property type="term" value="C:cytosolic large ribosomal subunit"/>
    <property type="evidence" value="ECO:0007669"/>
    <property type="project" value="TreeGrafter"/>
</dbReference>
<dbReference type="GO" id="GO:0008097">
    <property type="term" value="F:5S rRNA binding"/>
    <property type="evidence" value="ECO:0007669"/>
    <property type="project" value="TreeGrafter"/>
</dbReference>
<dbReference type="GO" id="GO:0003735">
    <property type="term" value="F:structural constituent of ribosome"/>
    <property type="evidence" value="ECO:0007669"/>
    <property type="project" value="InterPro"/>
</dbReference>
<dbReference type="GO" id="GO:0006412">
    <property type="term" value="P:translation"/>
    <property type="evidence" value="ECO:0007669"/>
    <property type="project" value="UniProtKB-UniRule"/>
</dbReference>
<dbReference type="CDD" id="cd00432">
    <property type="entry name" value="Ribosomal_L18_L5e"/>
    <property type="match status" value="1"/>
</dbReference>
<dbReference type="FunFam" id="3.30.420.100:FF:000001">
    <property type="entry name" value="50S ribosomal protein L18"/>
    <property type="match status" value="1"/>
</dbReference>
<dbReference type="Gene3D" id="3.30.420.100">
    <property type="match status" value="1"/>
</dbReference>
<dbReference type="HAMAP" id="MF_01337_B">
    <property type="entry name" value="Ribosomal_uL18_B"/>
    <property type="match status" value="1"/>
</dbReference>
<dbReference type="InterPro" id="IPR004389">
    <property type="entry name" value="Ribosomal_uL18_bac-type"/>
</dbReference>
<dbReference type="InterPro" id="IPR005484">
    <property type="entry name" value="Ribosomal_uL18_bac/euk"/>
</dbReference>
<dbReference type="NCBIfam" id="TIGR00060">
    <property type="entry name" value="L18_bact"/>
    <property type="match status" value="1"/>
</dbReference>
<dbReference type="PANTHER" id="PTHR12899">
    <property type="entry name" value="39S RIBOSOMAL PROTEIN L18, MITOCHONDRIAL"/>
    <property type="match status" value="1"/>
</dbReference>
<dbReference type="PANTHER" id="PTHR12899:SF3">
    <property type="entry name" value="LARGE RIBOSOMAL SUBUNIT PROTEIN UL18M"/>
    <property type="match status" value="1"/>
</dbReference>
<dbReference type="Pfam" id="PF00861">
    <property type="entry name" value="Ribosomal_L18p"/>
    <property type="match status" value="1"/>
</dbReference>
<dbReference type="SUPFAM" id="SSF53137">
    <property type="entry name" value="Translational machinery components"/>
    <property type="match status" value="1"/>
</dbReference>
<proteinExistence type="inferred from homology"/>
<keyword id="KW-1185">Reference proteome</keyword>
<keyword id="KW-0687">Ribonucleoprotein</keyword>
<keyword id="KW-0689">Ribosomal protein</keyword>
<keyword id="KW-0694">RNA-binding</keyword>
<keyword id="KW-0699">rRNA-binding</keyword>
<sequence>MSKLSRKQQTQKRHKRLRRNLSGTESRPRLAVFRSNNHIYAQIIDDDAQNTICAASTLDKDLKASLKVNAGSCDASTAVGELVAKKALSKGIKQVIFDRGGNIYHGRVKALAEAARVAGLNF</sequence>
<comment type="function">
    <text evidence="1">This is one of the proteins that bind and probably mediate the attachment of the 5S RNA into the large ribosomal subunit, where it forms part of the central protuberance.</text>
</comment>
<comment type="subunit">
    <text evidence="1">Part of the 50S ribosomal subunit; part of the 5S rRNA/L5/L18/L25 subcomplex. Contacts the 5S and 23S rRNAs.</text>
</comment>
<comment type="similarity">
    <text evidence="1">Belongs to the universal ribosomal protein uL18 family.</text>
</comment>
<protein>
    <recommendedName>
        <fullName evidence="1">Large ribosomal subunit protein uL18</fullName>
    </recommendedName>
    <alternativeName>
        <fullName evidence="3">50S ribosomal protein L18</fullName>
    </alternativeName>
</protein>
<name>RL18_PROMT</name>
<evidence type="ECO:0000255" key="1">
    <source>
        <dbReference type="HAMAP-Rule" id="MF_01337"/>
    </source>
</evidence>
<evidence type="ECO:0000256" key="2">
    <source>
        <dbReference type="SAM" id="MobiDB-lite"/>
    </source>
</evidence>
<evidence type="ECO:0000305" key="3"/>